<dbReference type="EMBL" id="DP000195">
    <property type="protein sequence ID" value="ABJ08878.1"/>
    <property type="molecule type" value="Genomic_DNA"/>
</dbReference>
<dbReference type="SMR" id="Q07DW4"/>
<dbReference type="GO" id="GO:0015629">
    <property type="term" value="C:actin cytoskeleton"/>
    <property type="evidence" value="ECO:0007669"/>
    <property type="project" value="TreeGrafter"/>
</dbReference>
<dbReference type="GO" id="GO:0005938">
    <property type="term" value="C:cell cortex"/>
    <property type="evidence" value="ECO:0007669"/>
    <property type="project" value="UniProtKB-SubCell"/>
</dbReference>
<dbReference type="GO" id="GO:0043197">
    <property type="term" value="C:dendritic spine"/>
    <property type="evidence" value="ECO:0000250"/>
    <property type="project" value="UniProtKB"/>
</dbReference>
<dbReference type="GO" id="GO:0090443">
    <property type="term" value="C:FAR/SIN/STRIPAK complex"/>
    <property type="evidence" value="ECO:0000250"/>
    <property type="project" value="UniProtKB"/>
</dbReference>
<dbReference type="GO" id="GO:0051721">
    <property type="term" value="F:protein phosphatase 2A binding"/>
    <property type="evidence" value="ECO:0007669"/>
    <property type="project" value="TreeGrafter"/>
</dbReference>
<dbReference type="Gene3D" id="1.25.40.20">
    <property type="entry name" value="Ankyrin repeat-containing domain"/>
    <property type="match status" value="1"/>
</dbReference>
<dbReference type="InterPro" id="IPR002110">
    <property type="entry name" value="Ankyrin_rpt"/>
</dbReference>
<dbReference type="InterPro" id="IPR036770">
    <property type="entry name" value="Ankyrin_rpt-contain_sf"/>
</dbReference>
<dbReference type="InterPro" id="IPR050719">
    <property type="entry name" value="Cortactin-Actin_Reg"/>
</dbReference>
<dbReference type="InterPro" id="IPR019131">
    <property type="entry name" value="Cortactin-binding_p2_N"/>
</dbReference>
<dbReference type="PANTHER" id="PTHR23166:SF9">
    <property type="entry name" value="CTTNBP2 N-TERMINAL-LIKE PROTEIN"/>
    <property type="match status" value="1"/>
</dbReference>
<dbReference type="PANTHER" id="PTHR23166">
    <property type="entry name" value="FILAMIN/GPBP-INTERACTING PROTEIN"/>
    <property type="match status" value="1"/>
</dbReference>
<dbReference type="Pfam" id="PF25408">
    <property type="entry name" value="AAA_lid_NAV1"/>
    <property type="match status" value="1"/>
</dbReference>
<dbReference type="Pfam" id="PF12796">
    <property type="entry name" value="Ank_2"/>
    <property type="match status" value="2"/>
</dbReference>
<dbReference type="Pfam" id="PF09727">
    <property type="entry name" value="CortBP2"/>
    <property type="match status" value="1"/>
</dbReference>
<dbReference type="SMART" id="SM00248">
    <property type="entry name" value="ANK"/>
    <property type="match status" value="6"/>
</dbReference>
<dbReference type="SUPFAM" id="SSF48403">
    <property type="entry name" value="Ankyrin repeat"/>
    <property type="match status" value="1"/>
</dbReference>
<dbReference type="PROSITE" id="PS50297">
    <property type="entry name" value="ANK_REP_REGION"/>
    <property type="match status" value="1"/>
</dbReference>
<dbReference type="PROSITE" id="PS50088">
    <property type="entry name" value="ANK_REPEAT"/>
    <property type="match status" value="4"/>
</dbReference>
<proteinExistence type="inferred from homology"/>
<organism>
    <name type="scientific">Muntiacus reevesi</name>
    <name type="common">Reeves' muntjac</name>
    <name type="synonym">Cervus reevesi</name>
    <dbReference type="NCBI Taxonomy" id="9886"/>
    <lineage>
        <taxon>Eukaryota</taxon>
        <taxon>Metazoa</taxon>
        <taxon>Chordata</taxon>
        <taxon>Craniata</taxon>
        <taxon>Vertebrata</taxon>
        <taxon>Euteleostomi</taxon>
        <taxon>Mammalia</taxon>
        <taxon>Eutheria</taxon>
        <taxon>Laurasiatheria</taxon>
        <taxon>Artiodactyla</taxon>
        <taxon>Ruminantia</taxon>
        <taxon>Pecora</taxon>
        <taxon>Cervidae</taxon>
        <taxon>Muntiacinae</taxon>
        <taxon>Muntiacus</taxon>
    </lineage>
</organism>
<name>CTTB2_MUNRE</name>
<feature type="chain" id="PRO_0000260409" description="Cortactin-binding protein 2">
    <location>
        <begin position="1"/>
        <end position="1642"/>
    </location>
</feature>
<feature type="repeat" description="ANK 1">
    <location>
        <begin position="702"/>
        <end position="732"/>
    </location>
</feature>
<feature type="repeat" description="ANK 2">
    <location>
        <begin position="736"/>
        <end position="765"/>
    </location>
</feature>
<feature type="repeat" description="ANK 3">
    <location>
        <begin position="769"/>
        <end position="798"/>
    </location>
</feature>
<feature type="repeat" description="ANK 4">
    <location>
        <begin position="802"/>
        <end position="831"/>
    </location>
</feature>
<feature type="repeat" description="ANK 5">
    <location>
        <begin position="835"/>
        <end position="864"/>
    </location>
</feature>
<feature type="repeat" description="ANK 6">
    <location>
        <begin position="904"/>
        <end position="934"/>
    </location>
</feature>
<feature type="region of interest" description="Disordered" evidence="5">
    <location>
        <begin position="1"/>
        <end position="27"/>
    </location>
</feature>
<feature type="region of interest" description="Disordered" evidence="5">
    <location>
        <begin position="203"/>
        <end position="222"/>
    </location>
</feature>
<feature type="region of interest" description="Disordered" evidence="5">
    <location>
        <begin position="366"/>
        <end position="433"/>
    </location>
</feature>
<feature type="region of interest" description="Disordered" evidence="5">
    <location>
        <begin position="446"/>
        <end position="471"/>
    </location>
</feature>
<feature type="region of interest" description="Disordered" evidence="5">
    <location>
        <begin position="491"/>
        <end position="611"/>
    </location>
</feature>
<feature type="region of interest" description="Disordered" evidence="5">
    <location>
        <begin position="1440"/>
        <end position="1469"/>
    </location>
</feature>
<feature type="region of interest" description="Disordered" evidence="5">
    <location>
        <begin position="1546"/>
        <end position="1642"/>
    </location>
</feature>
<feature type="coiled-coil region" evidence="4">
    <location>
        <begin position="119"/>
        <end position="276"/>
    </location>
</feature>
<feature type="compositionally biased region" description="Polar residues" evidence="5">
    <location>
        <begin position="385"/>
        <end position="394"/>
    </location>
</feature>
<feature type="compositionally biased region" description="Low complexity" evidence="5">
    <location>
        <begin position="395"/>
        <end position="407"/>
    </location>
</feature>
<feature type="compositionally biased region" description="Pro residues" evidence="5">
    <location>
        <begin position="497"/>
        <end position="506"/>
    </location>
</feature>
<feature type="compositionally biased region" description="Polar residues" evidence="5">
    <location>
        <begin position="576"/>
        <end position="586"/>
    </location>
</feature>
<feature type="compositionally biased region" description="Polar residues" evidence="5">
    <location>
        <begin position="1552"/>
        <end position="1563"/>
    </location>
</feature>
<feature type="compositionally biased region" description="Polar residues" evidence="5">
    <location>
        <begin position="1571"/>
        <end position="1588"/>
    </location>
</feature>
<feature type="compositionally biased region" description="Low complexity" evidence="5">
    <location>
        <begin position="1613"/>
        <end position="1627"/>
    </location>
</feature>
<feature type="modified residue" description="Asymmetric dimethylarginine" evidence="1">
    <location>
        <position position="491"/>
    </location>
</feature>
<feature type="modified residue" description="Phosphoserine" evidence="3">
    <location>
        <position position="1513"/>
    </location>
</feature>
<evidence type="ECO:0000250" key="1">
    <source>
        <dbReference type="UniProtKB" id="B9EJA2"/>
    </source>
</evidence>
<evidence type="ECO:0000250" key="2">
    <source>
        <dbReference type="UniProtKB" id="Q2IBD4"/>
    </source>
</evidence>
<evidence type="ECO:0000250" key="3">
    <source>
        <dbReference type="UniProtKB" id="Q8WZ74"/>
    </source>
</evidence>
<evidence type="ECO:0000255" key="4"/>
<evidence type="ECO:0000256" key="5">
    <source>
        <dbReference type="SAM" id="MobiDB-lite"/>
    </source>
</evidence>
<comment type="function">
    <text evidence="2">Regulates the dendritic spine distribution of CTTN/cortactin in hippocampal neurons, and thus controls dendritic spinogenesis and dendritic spine maintenance. Associates with the striatin-interacting phosphatase and kinase (STRIPAK) core complex to regulate dendritic spine distribution of the STRIPAK complex in hippocampal neurons.</text>
</comment>
<comment type="subunit">
    <text evidence="2">Interacts with CTTN/cortactin SH3 domain. Interacts with STRN, STRN4/zinedin and MOB4/phocein; this interactions mediate the association with the STRIPAK core complex and may regulate dendritic spine distribution of the STRIPAK complex in hippocampal neurons. Activation of glutamate receptors weakens the interaction with STRN and STRN4.</text>
</comment>
<comment type="subcellular location">
    <subcellularLocation>
        <location evidence="1">Cytoplasm</location>
        <location evidence="1">Cell cortex</location>
    </subcellularLocation>
    <subcellularLocation>
        <location evidence="2">Cell projection</location>
        <location evidence="2">Dendritic spine</location>
    </subcellularLocation>
    <text evidence="2">Remains associated with dendritic spines even after glutamate stimulation.</text>
</comment>
<accession>Q07DW4</accession>
<keyword id="KW-0040">ANK repeat</keyword>
<keyword id="KW-0966">Cell projection</keyword>
<keyword id="KW-0175">Coiled coil</keyword>
<keyword id="KW-0963">Cytoplasm</keyword>
<keyword id="KW-0488">Methylation</keyword>
<keyword id="KW-0597">Phosphoprotein</keyword>
<keyword id="KW-0677">Repeat</keyword>
<keyword id="KW-0770">Synapse</keyword>
<reference key="1">
    <citation type="submission" date="2006-09" db="EMBL/GenBank/DDBJ databases">
        <title>NISC comparative sequencing initiative.</title>
        <authorList>
            <person name="Antonellis A."/>
            <person name="Ayele K."/>
            <person name="Benjamin B."/>
            <person name="Blakesley R.W."/>
            <person name="Boakye A."/>
            <person name="Bouffard G.G."/>
            <person name="Brinkley C."/>
            <person name="Brooks S."/>
            <person name="Chu G."/>
            <person name="Coleman H."/>
            <person name="Engle J."/>
            <person name="Gestole M."/>
            <person name="Greene A."/>
            <person name="Guan X."/>
            <person name="Gupta J."/>
            <person name="Haghighi P."/>
            <person name="Han J."/>
            <person name="Hansen N."/>
            <person name="Ho S.-L."/>
            <person name="Hu P."/>
            <person name="Hunter G."/>
            <person name="Hurle B."/>
            <person name="Idol J.R."/>
            <person name="Kwong P."/>
            <person name="Laric P."/>
            <person name="Larson S."/>
            <person name="Lee-Lin S.-Q."/>
            <person name="Legaspi R."/>
            <person name="Madden M."/>
            <person name="Maduro Q.L."/>
            <person name="Maduro V.B."/>
            <person name="Margulies E.H."/>
            <person name="Masiello C."/>
            <person name="Maskeri B."/>
            <person name="McDowell J."/>
            <person name="Mojidi H.A."/>
            <person name="Mullikin J.C."/>
            <person name="Oestreicher J.S."/>
            <person name="Park M."/>
            <person name="Portnoy M.E."/>
            <person name="Prasad A."/>
            <person name="Puri O."/>
            <person name="Reddix-Dugue N."/>
            <person name="Schandler K."/>
            <person name="Schueler M.G."/>
            <person name="Sison C."/>
            <person name="Stantripop S."/>
            <person name="Stephen E."/>
            <person name="Taye A."/>
            <person name="Thomas J.W."/>
            <person name="Thomas P.J."/>
            <person name="Tsipouri V."/>
            <person name="Ung L."/>
            <person name="Vogt J.L."/>
            <person name="Wetherby K.D."/>
            <person name="Young A."/>
            <person name="Green E.D."/>
        </authorList>
    </citation>
    <scope>NUCLEOTIDE SEQUENCE [LARGE SCALE GENOMIC DNA]</scope>
</reference>
<protein>
    <recommendedName>
        <fullName>Cortactin-binding protein 2</fullName>
        <shortName>CortBP2</shortName>
    </recommendedName>
</protein>
<sequence length="1642" mass="178011">MATDGASCEPDFSRAPEDAAGAPAEAAKKEFDVDTLSKSELRMLLSVMEGELEARDLVIEALRARRKEVFIQERYGRFNLNDPFLALQRDYEAGASDKEKKPVCTNPLSILEAVMAHCRKMQERMSTQLAAAESRQKKLEMEKLQLQALEQEHKKLAARLEEERGKNKHVVLMLVKECKQLSGKVLEEAQKLEEVMAKLEEEKKKTSALEEELATEKRRSTEMEAQMEKQLSEFDTEREQLRAKLHREEAHTADLKEEIDKMKKMIEQLKRGTDSKPGLSLPRKTKDRRSISISVATEGPMTRSVACQTDLVMESAEPVKKLPLTVPVKPAAGSPPVAAGAKGNACASAAAVRPGVERQVSHGDLIGASLPAAPPPSANRIEENGPSTGSTADLTSSPTPVPSTVSPASGHTPAPPPHSLHSPCANAPLHPGLNPRIQAARFRFQGSNANDPDQNGNTTQSPPSRDVSPTSRDNLVAKQLARNTVTQALSRFTSPPAGAPPRPGAPPTGDVGTYPPVGRTSLKTPGGARVDRGNPPPIPPKKPGLSQTPSPPHPQLKVIMDSSRASSTGIKADNKTVASPPSTLPQGSRVMNEENLSKSSSPQLPPKPSIDLTVAPAGCAVSALATSQVGAWPAETPGLNQSACSERSLVIPTTTASSSSIHPVNASSRRAGASDSLLVTASGWSPSLTPLLMSGGPAPLAGRPTLLQQAAAQGNVTLLSMLLNEEGLDINYSCEDGHSALYSAAKNGHTDCVRLLLNAEAQVNVADTNGFTPLCAAAAQGHFKCVELLIAYDANINHAADGGQTPLYLACKNGNKECIKLLLEAGTDRSVKTRDGWTPIHAAVDTGNVDSLKLLMYHRAPAHGNKLREEPGLAIFDLDQEEERHEGTSKPVVPADLINHADSEGWTAAHIAASKGFKNCLEVLCRHGGLEPERRDKCNRTAHDVATDDCKHLLENLNALKIPLRISVGEIEPGNYGADDFECENTICALNIRKQTSWDDFSKAVSQALTNHFQAISSDGWWSLEDMTFNSTTDSSIGLSASSVRSITLGTVPWSAGQSFAQSPWDFVRTNKAEQVTVLLSGPQEGCLSSVTYASMIPLQMLQNYLRLVEQYHNVIFHGPEGSLQDYIAHQLALCLKHRQMAAGFPCEIVRAEVDADFSKEQLVDLFISNACLIPVKQSPANKKIIVILENLEKSSLSELLGDFLGPLENHSTESPCTFQKGNGTSECYYFHENCFLMGTIAKACLQGSDLLVQQHFRWVQLRWDGEPMQGLLRRFLRRKVVNKFRGQVPSPCDPVCKTVDWALAVWRQLNSCLARLGTPEALLGPKYFLSCPVIPGHAQATVKWMSKLWNAVIAPRVQEAILSRASVKRQPGLGQTTKNPSQGQQAVVRAALSILLNKAVLHGCPLQRAELDQHTADFKGGSFPLSIVSSYGSCNKKKESGAWRKVSTSPRKKSGRFSSPTWNKPDLSEEGIKSNTILQLNCNRNASLSNQKSLENDLSLTLDLDQRLSLGSDDEADLVKELQSMCASKSESDISKIADSRDDLRRFDSSGNNPVFSATVNNPRMPVSQKEVSPLSSHQTTECSNSKSKTELGVSRVKSFLPVPRSKATQCSQNTKRSSSSSNTRQIEINNNSRDLEPTQK</sequence>
<gene>
    <name type="primary">CTTNBP2</name>
    <name type="synonym">CORTBP2</name>
</gene>